<reference key="1">
    <citation type="journal article" date="2013" name="Nature">
        <title>The zebrafish reference genome sequence and its relationship to the human genome.</title>
        <authorList>
            <person name="Howe K."/>
            <person name="Clark M.D."/>
            <person name="Torroja C.F."/>
            <person name="Torrance J."/>
            <person name="Berthelot C."/>
            <person name="Muffato M."/>
            <person name="Collins J.E."/>
            <person name="Humphray S."/>
            <person name="McLaren K."/>
            <person name="Matthews L."/>
            <person name="McLaren S."/>
            <person name="Sealy I."/>
            <person name="Caccamo M."/>
            <person name="Churcher C."/>
            <person name="Scott C."/>
            <person name="Barrett J.C."/>
            <person name="Koch R."/>
            <person name="Rauch G.J."/>
            <person name="White S."/>
            <person name="Chow W."/>
            <person name="Kilian B."/>
            <person name="Quintais L.T."/>
            <person name="Guerra-Assuncao J.A."/>
            <person name="Zhou Y."/>
            <person name="Gu Y."/>
            <person name="Yen J."/>
            <person name="Vogel J.H."/>
            <person name="Eyre T."/>
            <person name="Redmond S."/>
            <person name="Banerjee R."/>
            <person name="Chi J."/>
            <person name="Fu B."/>
            <person name="Langley E."/>
            <person name="Maguire S.F."/>
            <person name="Laird G.K."/>
            <person name="Lloyd D."/>
            <person name="Kenyon E."/>
            <person name="Donaldson S."/>
            <person name="Sehra H."/>
            <person name="Almeida-King J."/>
            <person name="Loveland J."/>
            <person name="Trevanion S."/>
            <person name="Jones M."/>
            <person name="Quail M."/>
            <person name="Willey D."/>
            <person name="Hunt A."/>
            <person name="Burton J."/>
            <person name="Sims S."/>
            <person name="McLay K."/>
            <person name="Plumb B."/>
            <person name="Davis J."/>
            <person name="Clee C."/>
            <person name="Oliver K."/>
            <person name="Clark R."/>
            <person name="Riddle C."/>
            <person name="Elliot D."/>
            <person name="Threadgold G."/>
            <person name="Harden G."/>
            <person name="Ware D."/>
            <person name="Begum S."/>
            <person name="Mortimore B."/>
            <person name="Kerry G."/>
            <person name="Heath P."/>
            <person name="Phillimore B."/>
            <person name="Tracey A."/>
            <person name="Corby N."/>
            <person name="Dunn M."/>
            <person name="Johnson C."/>
            <person name="Wood J."/>
            <person name="Clark S."/>
            <person name="Pelan S."/>
            <person name="Griffiths G."/>
            <person name="Smith M."/>
            <person name="Glithero R."/>
            <person name="Howden P."/>
            <person name="Barker N."/>
            <person name="Lloyd C."/>
            <person name="Stevens C."/>
            <person name="Harley J."/>
            <person name="Holt K."/>
            <person name="Panagiotidis G."/>
            <person name="Lovell J."/>
            <person name="Beasley H."/>
            <person name="Henderson C."/>
            <person name="Gordon D."/>
            <person name="Auger K."/>
            <person name="Wright D."/>
            <person name="Collins J."/>
            <person name="Raisen C."/>
            <person name="Dyer L."/>
            <person name="Leung K."/>
            <person name="Robertson L."/>
            <person name="Ambridge K."/>
            <person name="Leongamornlert D."/>
            <person name="McGuire S."/>
            <person name="Gilderthorp R."/>
            <person name="Griffiths C."/>
            <person name="Manthravadi D."/>
            <person name="Nichol S."/>
            <person name="Barker G."/>
            <person name="Whitehead S."/>
            <person name="Kay M."/>
            <person name="Brown J."/>
            <person name="Murnane C."/>
            <person name="Gray E."/>
            <person name="Humphries M."/>
            <person name="Sycamore N."/>
            <person name="Barker D."/>
            <person name="Saunders D."/>
            <person name="Wallis J."/>
            <person name="Babbage A."/>
            <person name="Hammond S."/>
            <person name="Mashreghi-Mohammadi M."/>
            <person name="Barr L."/>
            <person name="Martin S."/>
            <person name="Wray P."/>
            <person name="Ellington A."/>
            <person name="Matthews N."/>
            <person name="Ellwood M."/>
            <person name="Woodmansey R."/>
            <person name="Clark G."/>
            <person name="Cooper J."/>
            <person name="Tromans A."/>
            <person name="Grafham D."/>
            <person name="Skuce C."/>
            <person name="Pandian R."/>
            <person name="Andrews R."/>
            <person name="Harrison E."/>
            <person name="Kimberley A."/>
            <person name="Garnett J."/>
            <person name="Fosker N."/>
            <person name="Hall R."/>
            <person name="Garner P."/>
            <person name="Kelly D."/>
            <person name="Bird C."/>
            <person name="Palmer S."/>
            <person name="Gehring I."/>
            <person name="Berger A."/>
            <person name="Dooley C.M."/>
            <person name="Ersan-Urun Z."/>
            <person name="Eser C."/>
            <person name="Geiger H."/>
            <person name="Geisler M."/>
            <person name="Karotki L."/>
            <person name="Kirn A."/>
            <person name="Konantz J."/>
            <person name="Konantz M."/>
            <person name="Oberlander M."/>
            <person name="Rudolph-Geiger S."/>
            <person name="Teucke M."/>
            <person name="Lanz C."/>
            <person name="Raddatz G."/>
            <person name="Osoegawa K."/>
            <person name="Zhu B."/>
            <person name="Rapp A."/>
            <person name="Widaa S."/>
            <person name="Langford C."/>
            <person name="Yang F."/>
            <person name="Schuster S.C."/>
            <person name="Carter N.P."/>
            <person name="Harrow J."/>
            <person name="Ning Z."/>
            <person name="Herrero J."/>
            <person name="Searle S.M."/>
            <person name="Enright A."/>
            <person name="Geisler R."/>
            <person name="Plasterk R.H."/>
            <person name="Lee C."/>
            <person name="Westerfield M."/>
            <person name="de Jong P.J."/>
            <person name="Zon L.I."/>
            <person name="Postlethwait J.H."/>
            <person name="Nusslein-Volhard C."/>
            <person name="Hubbard T.J."/>
            <person name="Roest Crollius H."/>
            <person name="Rogers J."/>
            <person name="Stemple D.L."/>
        </authorList>
    </citation>
    <scope>NUCLEOTIDE SEQUENCE [LARGE SCALE GENOMIC DNA]</scope>
    <source>
        <strain>Tuebingen</strain>
    </source>
</reference>
<sequence>MARSLLKIHRYFRRKPVRFFSFILLYLTAGSLVFLHSGFSSDSSTAGIAGSGSDPLLSEGRGGTGGGSATSEGLGLLGRVFKETRRTPRRFGPPWMKESRGQDAPEWAGRGFDHTSSWSHGAKGRTTKEMDDGRAKYIGCYVDDTQKRALRGVSFLDYKKMTVFRCQDNCAERGYLYAGLEFGAECYCGHKIQAPNVSESECNMECKGEKSNLCGGPNRLSIYRLELSQESARRYGSAIFKGCFRRPDNVTLALPASAVMQNMSVDKCVDMCTEKEFSLAALAGDKCHCGFPTPLFNLHEHEDEELCLHRCTGEDFESCGNRDFFVVYQTQVQDNRCMDRRFLPTRSKHLMALASFPGAGNTWARHLIELATGYYTGSYYFDGSLYNKGFKGERDHWRSGRTICIKTHESGKKEIETFDASILMIRNPYKALMAEFNRKYGGHIGFASQAHWRGKEWPEFVKNYAPWWASHTLDWLKYGKKVQVVHFEDLKRDLFSQLKGMVIFLGLEVSEDRLLCVEGQKDGNFKRSGLRKLEYDPYTVEMRATIDRLIKTVDMELRKRNLSGVPDEYRPR</sequence>
<dbReference type="EMBL" id="BX510312">
    <property type="protein sequence ID" value="CAM14122.1"/>
    <property type="molecule type" value="Genomic_DNA"/>
</dbReference>
<dbReference type="RefSeq" id="NP_001103239.1">
    <property type="nucleotide sequence ID" value="NM_001109769.1"/>
</dbReference>
<dbReference type="SMR" id="A2BGL3"/>
<dbReference type="FunCoup" id="A2BGL3">
    <property type="interactions" value="744"/>
</dbReference>
<dbReference type="STRING" id="7955.ENSDARP00000083072"/>
<dbReference type="GlyCosmos" id="A2BGL3">
    <property type="glycosylation" value="4 sites, No reported glycans"/>
</dbReference>
<dbReference type="PaxDb" id="7955-ENSDARP00000083072"/>
<dbReference type="Ensembl" id="ENSDART00000088639">
    <property type="protein sequence ID" value="ENSDARP00000083072"/>
    <property type="gene ID" value="ENSDARG00000061819"/>
</dbReference>
<dbReference type="GeneID" id="561091"/>
<dbReference type="KEGG" id="dre:561091"/>
<dbReference type="AGR" id="ZFIN:ZDB-GENE-060526-124"/>
<dbReference type="CTD" id="9671"/>
<dbReference type="ZFIN" id="ZDB-GENE-060526-124">
    <property type="gene designation" value="wscd2"/>
</dbReference>
<dbReference type="eggNOG" id="KOG4157">
    <property type="taxonomic scope" value="Eukaryota"/>
</dbReference>
<dbReference type="HOGENOM" id="CLU_029239_0_0_1"/>
<dbReference type="InParanoid" id="A2BGL3"/>
<dbReference type="OMA" id="ERSNTCG"/>
<dbReference type="OrthoDB" id="5985073at2759"/>
<dbReference type="PhylomeDB" id="A2BGL3"/>
<dbReference type="TreeFam" id="TF324060"/>
<dbReference type="PRO" id="PR:A2BGL3"/>
<dbReference type="Proteomes" id="UP000000437">
    <property type="component" value="Chromosome 5"/>
</dbReference>
<dbReference type="Bgee" id="ENSDARG00000061819">
    <property type="expression patterns" value="Expressed in heart and 14 other cell types or tissues"/>
</dbReference>
<dbReference type="GO" id="GO:0000139">
    <property type="term" value="C:Golgi membrane"/>
    <property type="evidence" value="ECO:0000250"/>
    <property type="project" value="UniProtKB"/>
</dbReference>
<dbReference type="GO" id="GO:0008146">
    <property type="term" value="F:sulfotransferase activity"/>
    <property type="evidence" value="ECO:0000250"/>
    <property type="project" value="UniProtKB"/>
</dbReference>
<dbReference type="Gene3D" id="3.40.50.300">
    <property type="entry name" value="P-loop containing nucleotide triphosphate hydrolases"/>
    <property type="match status" value="1"/>
</dbReference>
<dbReference type="InterPro" id="IPR027417">
    <property type="entry name" value="P-loop_NTPase"/>
</dbReference>
<dbReference type="InterPro" id="IPR051589">
    <property type="entry name" value="Sialate-O-sulfotransferase"/>
</dbReference>
<dbReference type="InterPro" id="IPR000863">
    <property type="entry name" value="Sulfotransferase_dom"/>
</dbReference>
<dbReference type="InterPro" id="IPR002889">
    <property type="entry name" value="WSC_carb-bd"/>
</dbReference>
<dbReference type="PANTHER" id="PTHR45964:SF7">
    <property type="entry name" value="SIALATE:O-SULFOTRANSFERASE 2"/>
    <property type="match status" value="1"/>
</dbReference>
<dbReference type="PANTHER" id="PTHR45964">
    <property type="entry name" value="WSCD FAMILY MEMBER CG9164"/>
    <property type="match status" value="1"/>
</dbReference>
<dbReference type="Pfam" id="PF00685">
    <property type="entry name" value="Sulfotransfer_1"/>
    <property type="match status" value="1"/>
</dbReference>
<dbReference type="Pfam" id="PF01822">
    <property type="entry name" value="WSC"/>
    <property type="match status" value="2"/>
</dbReference>
<dbReference type="SMART" id="SM00321">
    <property type="entry name" value="WSC"/>
    <property type="match status" value="2"/>
</dbReference>
<dbReference type="SUPFAM" id="SSF52540">
    <property type="entry name" value="P-loop containing nucleoside triphosphate hydrolases"/>
    <property type="match status" value="1"/>
</dbReference>
<dbReference type="PROSITE" id="PS51212">
    <property type="entry name" value="WSC"/>
    <property type="match status" value="2"/>
</dbReference>
<proteinExistence type="inferred from homology"/>
<comment type="function">
    <text evidence="1">Sialate:O-sulfotransferase which catalyzes 8-O-sulfation at the Sia-glycan level using 3'-phosphoadenosine 5'-phosphosulfate (PAPS) as a donor, forming 8-O-sulfated Sia (Sia8S)-glycans.</text>
</comment>
<comment type="subcellular location">
    <subcellularLocation>
        <location evidence="1">Golgi apparatus membrane</location>
        <topology evidence="1">Single-pass type II membrane protein</topology>
    </subcellularLocation>
</comment>
<comment type="similarity">
    <text evidence="4">Belongs to the WSCD family.</text>
</comment>
<accession>A2BGL3</accession>
<name>WSCD2_DANRE</name>
<evidence type="ECO:0000250" key="1">
    <source>
        <dbReference type="UniProtKB" id="D4PHA7"/>
    </source>
</evidence>
<evidence type="ECO:0000255" key="2"/>
<evidence type="ECO:0000255" key="3">
    <source>
        <dbReference type="PROSITE-ProRule" id="PRU00558"/>
    </source>
</evidence>
<evidence type="ECO:0000305" key="4"/>
<keyword id="KW-0325">Glycoprotein</keyword>
<keyword id="KW-0333">Golgi apparatus</keyword>
<keyword id="KW-0472">Membrane</keyword>
<keyword id="KW-1185">Reference proteome</keyword>
<keyword id="KW-0677">Repeat</keyword>
<keyword id="KW-0735">Signal-anchor</keyword>
<keyword id="KW-0812">Transmembrane</keyword>
<keyword id="KW-1133">Transmembrane helix</keyword>
<gene>
    <name type="primary">wscd2</name>
    <name type="ORF">si:ch211-240b21.1</name>
</gene>
<organism>
    <name type="scientific">Danio rerio</name>
    <name type="common">Zebrafish</name>
    <name type="synonym">Brachydanio rerio</name>
    <dbReference type="NCBI Taxonomy" id="7955"/>
    <lineage>
        <taxon>Eukaryota</taxon>
        <taxon>Metazoa</taxon>
        <taxon>Chordata</taxon>
        <taxon>Craniata</taxon>
        <taxon>Vertebrata</taxon>
        <taxon>Euteleostomi</taxon>
        <taxon>Actinopterygii</taxon>
        <taxon>Neopterygii</taxon>
        <taxon>Teleostei</taxon>
        <taxon>Ostariophysi</taxon>
        <taxon>Cypriniformes</taxon>
        <taxon>Danionidae</taxon>
        <taxon>Danioninae</taxon>
        <taxon>Danio</taxon>
    </lineage>
</organism>
<protein>
    <recommendedName>
        <fullName evidence="1">Sialate:O-sulfotransferase 2</fullName>
    </recommendedName>
    <alternativeName>
        <fullName>WSC domain-containing protein 2</fullName>
    </alternativeName>
</protein>
<feature type="chain" id="PRO_0000305066" description="Sialate:O-sulfotransferase 2">
    <location>
        <begin position="1"/>
        <end position="572"/>
    </location>
</feature>
<feature type="topological domain" description="Cytoplasmic" evidence="1">
    <location>
        <begin position="1"/>
        <end position="18"/>
    </location>
</feature>
<feature type="transmembrane region" description="Helical; Signal-anchor for type II membrane protein" evidence="2">
    <location>
        <begin position="19"/>
        <end position="39"/>
    </location>
</feature>
<feature type="topological domain" description="Extracellular" evidence="1">
    <location>
        <begin position="40"/>
        <end position="572"/>
    </location>
</feature>
<feature type="domain" description="WSC 1" evidence="3">
    <location>
        <begin position="134"/>
        <end position="226"/>
    </location>
</feature>
<feature type="domain" description="WSC 2" evidence="3">
    <location>
        <begin position="237"/>
        <end position="331"/>
    </location>
</feature>
<feature type="glycosylation site" description="N-linked (GlcNAc...) asparagine" evidence="2">
    <location>
        <position position="196"/>
    </location>
</feature>
<feature type="glycosylation site" description="N-linked (GlcNAc...) asparagine" evidence="2">
    <location>
        <position position="249"/>
    </location>
</feature>
<feature type="glycosylation site" description="N-linked (GlcNAc...) asparagine" evidence="2">
    <location>
        <position position="262"/>
    </location>
</feature>
<feature type="glycosylation site" description="N-linked (GlcNAc...) asparagine" evidence="2">
    <location>
        <position position="561"/>
    </location>
</feature>